<protein>
    <recommendedName>
        <fullName evidence="1">Deoxyuridine 5'-triphosphate nucleotidohydrolase</fullName>
        <shortName evidence="1">dUTPase</shortName>
        <ecNumber evidence="1">3.6.1.23</ecNumber>
    </recommendedName>
    <alternativeName>
        <fullName evidence="1">dUTP pyrophosphatase</fullName>
    </alternativeName>
</protein>
<feature type="chain" id="PRO_0000182898" description="Deoxyuridine 5'-triphosphate nucleotidohydrolase">
    <location>
        <begin position="1"/>
        <end position="148"/>
    </location>
</feature>
<feature type="binding site" evidence="1">
    <location>
        <begin position="67"/>
        <end position="69"/>
    </location>
    <ligand>
        <name>substrate</name>
    </ligand>
</feature>
<feature type="binding site" evidence="1">
    <location>
        <position position="80"/>
    </location>
    <ligand>
        <name>substrate</name>
    </ligand>
</feature>
<feature type="binding site" evidence="1">
    <location>
        <begin position="84"/>
        <end position="86"/>
    </location>
    <ligand>
        <name>substrate</name>
    </ligand>
</feature>
<feature type="binding site" evidence="1">
    <location>
        <position position="94"/>
    </location>
    <ligand>
        <name>substrate</name>
    </ligand>
</feature>
<accession>Q8XWL1</accession>
<sequence length="148" mass="15745">MKLDVQILDARLHEQLPQYATPGSAGLDLRACLDAPLTLEPGSTHLIPTGMAIHLADPGYAALILPRSGMGHKHGIVLGNLVGLIDSDYQGQLMISTWNRGDTAFVLNPMERLAQLVIVPVVQAELNIVDAFAESERGAGGFGSTGRH</sequence>
<gene>
    <name evidence="1" type="primary">dut</name>
    <name type="ordered locus">RSc2463</name>
    <name type="ORF">RS01142</name>
</gene>
<name>DUT_RALN1</name>
<reference key="1">
    <citation type="journal article" date="2002" name="Nature">
        <title>Genome sequence of the plant pathogen Ralstonia solanacearum.</title>
        <authorList>
            <person name="Salanoubat M."/>
            <person name="Genin S."/>
            <person name="Artiguenave F."/>
            <person name="Gouzy J."/>
            <person name="Mangenot S."/>
            <person name="Arlat M."/>
            <person name="Billault A."/>
            <person name="Brottier P."/>
            <person name="Camus J.-C."/>
            <person name="Cattolico L."/>
            <person name="Chandler M."/>
            <person name="Choisne N."/>
            <person name="Claudel-Renard C."/>
            <person name="Cunnac S."/>
            <person name="Demange N."/>
            <person name="Gaspin C."/>
            <person name="Lavie M."/>
            <person name="Moisan A."/>
            <person name="Robert C."/>
            <person name="Saurin W."/>
            <person name="Schiex T."/>
            <person name="Siguier P."/>
            <person name="Thebault P."/>
            <person name="Whalen M."/>
            <person name="Wincker P."/>
            <person name="Levy M."/>
            <person name="Weissenbach J."/>
            <person name="Boucher C.A."/>
        </authorList>
    </citation>
    <scope>NUCLEOTIDE SEQUENCE [LARGE SCALE GENOMIC DNA]</scope>
    <source>
        <strain>ATCC BAA-1114 / GMI1000</strain>
    </source>
</reference>
<proteinExistence type="inferred from homology"/>
<dbReference type="EC" id="3.6.1.23" evidence="1"/>
<dbReference type="EMBL" id="AL646052">
    <property type="protein sequence ID" value="CAD16170.1"/>
    <property type="molecule type" value="Genomic_DNA"/>
</dbReference>
<dbReference type="RefSeq" id="WP_011002380.1">
    <property type="nucleotide sequence ID" value="NC_003295.1"/>
</dbReference>
<dbReference type="SMR" id="Q8XWL1"/>
<dbReference type="STRING" id="267608.RSc2463"/>
<dbReference type="EnsemblBacteria" id="CAD16170">
    <property type="protein sequence ID" value="CAD16170"/>
    <property type="gene ID" value="RSc2463"/>
</dbReference>
<dbReference type="KEGG" id="rso:RSc2463"/>
<dbReference type="eggNOG" id="COG0756">
    <property type="taxonomic scope" value="Bacteria"/>
</dbReference>
<dbReference type="HOGENOM" id="CLU_068508_1_1_4"/>
<dbReference type="UniPathway" id="UPA00610">
    <property type="reaction ID" value="UER00666"/>
</dbReference>
<dbReference type="Proteomes" id="UP000001436">
    <property type="component" value="Chromosome"/>
</dbReference>
<dbReference type="GO" id="GO:0004170">
    <property type="term" value="F:dUTP diphosphatase activity"/>
    <property type="evidence" value="ECO:0007669"/>
    <property type="project" value="UniProtKB-UniRule"/>
</dbReference>
<dbReference type="GO" id="GO:0000287">
    <property type="term" value="F:magnesium ion binding"/>
    <property type="evidence" value="ECO:0007669"/>
    <property type="project" value="UniProtKB-UniRule"/>
</dbReference>
<dbReference type="GO" id="GO:0006226">
    <property type="term" value="P:dUMP biosynthetic process"/>
    <property type="evidence" value="ECO:0007669"/>
    <property type="project" value="UniProtKB-UniRule"/>
</dbReference>
<dbReference type="GO" id="GO:0046081">
    <property type="term" value="P:dUTP catabolic process"/>
    <property type="evidence" value="ECO:0007669"/>
    <property type="project" value="InterPro"/>
</dbReference>
<dbReference type="CDD" id="cd07557">
    <property type="entry name" value="trimeric_dUTPase"/>
    <property type="match status" value="1"/>
</dbReference>
<dbReference type="FunFam" id="2.70.40.10:FF:000002">
    <property type="entry name" value="dUTP diphosphatase"/>
    <property type="match status" value="1"/>
</dbReference>
<dbReference type="Gene3D" id="2.70.40.10">
    <property type="match status" value="1"/>
</dbReference>
<dbReference type="HAMAP" id="MF_00116">
    <property type="entry name" value="dUTPase_bact"/>
    <property type="match status" value="1"/>
</dbReference>
<dbReference type="InterPro" id="IPR008181">
    <property type="entry name" value="dUTPase"/>
</dbReference>
<dbReference type="InterPro" id="IPR029054">
    <property type="entry name" value="dUTPase-like"/>
</dbReference>
<dbReference type="InterPro" id="IPR036157">
    <property type="entry name" value="dUTPase-like_sf"/>
</dbReference>
<dbReference type="InterPro" id="IPR033704">
    <property type="entry name" value="dUTPase_trimeric"/>
</dbReference>
<dbReference type="NCBIfam" id="TIGR00576">
    <property type="entry name" value="dut"/>
    <property type="match status" value="1"/>
</dbReference>
<dbReference type="NCBIfam" id="NF001862">
    <property type="entry name" value="PRK00601.1"/>
    <property type="match status" value="1"/>
</dbReference>
<dbReference type="PANTHER" id="PTHR11241">
    <property type="entry name" value="DEOXYURIDINE 5'-TRIPHOSPHATE NUCLEOTIDOHYDROLASE"/>
    <property type="match status" value="1"/>
</dbReference>
<dbReference type="PANTHER" id="PTHR11241:SF0">
    <property type="entry name" value="DEOXYURIDINE 5'-TRIPHOSPHATE NUCLEOTIDOHYDROLASE"/>
    <property type="match status" value="1"/>
</dbReference>
<dbReference type="Pfam" id="PF00692">
    <property type="entry name" value="dUTPase"/>
    <property type="match status" value="1"/>
</dbReference>
<dbReference type="SUPFAM" id="SSF51283">
    <property type="entry name" value="dUTPase-like"/>
    <property type="match status" value="1"/>
</dbReference>
<evidence type="ECO:0000255" key="1">
    <source>
        <dbReference type="HAMAP-Rule" id="MF_00116"/>
    </source>
</evidence>
<keyword id="KW-0378">Hydrolase</keyword>
<keyword id="KW-0460">Magnesium</keyword>
<keyword id="KW-0479">Metal-binding</keyword>
<keyword id="KW-0546">Nucleotide metabolism</keyword>
<keyword id="KW-1185">Reference proteome</keyword>
<comment type="function">
    <text evidence="1">This enzyme is involved in nucleotide metabolism: it produces dUMP, the immediate precursor of thymidine nucleotides and it decreases the intracellular concentration of dUTP so that uracil cannot be incorporated into DNA.</text>
</comment>
<comment type="catalytic activity">
    <reaction evidence="1">
        <text>dUTP + H2O = dUMP + diphosphate + H(+)</text>
        <dbReference type="Rhea" id="RHEA:10248"/>
        <dbReference type="ChEBI" id="CHEBI:15377"/>
        <dbReference type="ChEBI" id="CHEBI:15378"/>
        <dbReference type="ChEBI" id="CHEBI:33019"/>
        <dbReference type="ChEBI" id="CHEBI:61555"/>
        <dbReference type="ChEBI" id="CHEBI:246422"/>
        <dbReference type="EC" id="3.6.1.23"/>
    </reaction>
</comment>
<comment type="cofactor">
    <cofactor evidence="1">
        <name>Mg(2+)</name>
        <dbReference type="ChEBI" id="CHEBI:18420"/>
    </cofactor>
</comment>
<comment type="pathway">
    <text evidence="1">Pyrimidine metabolism; dUMP biosynthesis; dUMP from dCTP (dUTP route): step 2/2.</text>
</comment>
<comment type="similarity">
    <text evidence="1">Belongs to the dUTPase family.</text>
</comment>
<organism>
    <name type="scientific">Ralstonia nicotianae (strain ATCC BAA-1114 / GMI1000)</name>
    <name type="common">Ralstonia solanacearum</name>
    <dbReference type="NCBI Taxonomy" id="267608"/>
    <lineage>
        <taxon>Bacteria</taxon>
        <taxon>Pseudomonadati</taxon>
        <taxon>Pseudomonadota</taxon>
        <taxon>Betaproteobacteria</taxon>
        <taxon>Burkholderiales</taxon>
        <taxon>Burkholderiaceae</taxon>
        <taxon>Ralstonia</taxon>
        <taxon>Ralstonia solanacearum species complex</taxon>
    </lineage>
</organism>